<protein>
    <recommendedName>
        <fullName>Homeobox-leucine zipper protein HOX3</fullName>
    </recommendedName>
    <alternativeName>
        <fullName>HD-ZIP protein HOX3</fullName>
    </alternativeName>
    <alternativeName>
        <fullName>Homeodomain transcription factor HOX3</fullName>
    </alternativeName>
    <alternativeName>
        <fullName>OsHox3</fullName>
    </alternativeName>
</protein>
<comment type="function">
    <text evidence="3">Probable transcription repressor that binds to the DNA sequence 5'-CAAT[GC]ATTG-3'.</text>
</comment>
<comment type="subunit">
    <text evidence="3 5">Homodimer (Probable). May form a heterodimer with HOX1, HOX2 or HOX7.</text>
</comment>
<comment type="subcellular location">
    <subcellularLocation>
        <location evidence="5">Nucleus</location>
    </subcellularLocation>
</comment>
<comment type="tissue specificity">
    <text evidence="3 4">Expressed in seedlings, roots, leaves, nodes, internodes, flowers and embryo.</text>
</comment>
<comment type="similarity">
    <text evidence="5">Belongs to the HD-ZIP homeobox family. Class II subfamily.</text>
</comment>
<comment type="sequence caution" evidence="5">
    <conflict type="erroneous initiation">
        <sequence resource="EMBL-CDS" id="EAY75147"/>
    </conflict>
</comment>
<organism>
    <name type="scientific">Oryza sativa subsp. indica</name>
    <name type="common">Rice</name>
    <dbReference type="NCBI Taxonomy" id="39946"/>
    <lineage>
        <taxon>Eukaryota</taxon>
        <taxon>Viridiplantae</taxon>
        <taxon>Streptophyta</taxon>
        <taxon>Embryophyta</taxon>
        <taxon>Tracheophyta</taxon>
        <taxon>Spermatophyta</taxon>
        <taxon>Magnoliopsida</taxon>
        <taxon>Liliopsida</taxon>
        <taxon>Poales</taxon>
        <taxon>Poaceae</taxon>
        <taxon>BOP clade</taxon>
        <taxon>Oryzoideae</taxon>
        <taxon>Oryzeae</taxon>
        <taxon>Oryzinae</taxon>
        <taxon>Oryza</taxon>
        <taxon>Oryza sativa</taxon>
    </lineage>
</organism>
<sequence>MMGATSPSGLELTMAVPGLSSSGSEGAGCNNNNAGGGCNMRDLDINQPASGGEEEEFPMGSVEEDEEERGVGGPHRPKKLRLSKEQSRLLEESFRLNHTLTPKQKEALAIKLKLRPRQVEVWFQNRRARTKLKQTEMECEYLKRCFGSLTEENRRLQREVEELRAMRVAPPTVLSPHTRQPLPASALTMCPRCERITAATGPPAVRPPPSSAAAAAPSPFHPRRPSAAF</sequence>
<reference key="1">
    <citation type="journal article" date="2000" name="Mol. Gen. Genet.">
        <title>HD-Zip proteins of families I and II from rice: interactions and functional properties.</title>
        <authorList>
            <person name="Meijer A.H."/>
            <person name="de Kam R.J."/>
            <person name="d'Erfurth I."/>
            <person name="Shen W.-B."/>
            <person name="Hoge J.H.C."/>
        </authorList>
    </citation>
    <scope>NUCLEOTIDE SEQUENCE [MRNA]</scope>
    <scope>FUNCTION</scope>
    <scope>SUBUNIT</scope>
    <scope>TISSUE SPECIFICITY</scope>
    <source>
        <strain>cv. IR58</strain>
        <tissue>Seed embryo</tissue>
    </source>
</reference>
<reference key="2">
    <citation type="journal article" date="2005" name="PLoS Biol.">
        <title>The genomes of Oryza sativa: a history of duplications.</title>
        <authorList>
            <person name="Yu J."/>
            <person name="Wang J."/>
            <person name="Lin W."/>
            <person name="Li S."/>
            <person name="Li H."/>
            <person name="Zhou J."/>
            <person name="Ni P."/>
            <person name="Dong W."/>
            <person name="Hu S."/>
            <person name="Zeng C."/>
            <person name="Zhang J."/>
            <person name="Zhang Y."/>
            <person name="Li R."/>
            <person name="Xu Z."/>
            <person name="Li S."/>
            <person name="Li X."/>
            <person name="Zheng H."/>
            <person name="Cong L."/>
            <person name="Lin L."/>
            <person name="Yin J."/>
            <person name="Geng J."/>
            <person name="Li G."/>
            <person name="Shi J."/>
            <person name="Liu J."/>
            <person name="Lv H."/>
            <person name="Li J."/>
            <person name="Wang J."/>
            <person name="Deng Y."/>
            <person name="Ran L."/>
            <person name="Shi X."/>
            <person name="Wang X."/>
            <person name="Wu Q."/>
            <person name="Li C."/>
            <person name="Ren X."/>
            <person name="Wang J."/>
            <person name="Wang X."/>
            <person name="Li D."/>
            <person name="Liu D."/>
            <person name="Zhang X."/>
            <person name="Ji Z."/>
            <person name="Zhao W."/>
            <person name="Sun Y."/>
            <person name="Zhang Z."/>
            <person name="Bao J."/>
            <person name="Han Y."/>
            <person name="Dong L."/>
            <person name="Ji J."/>
            <person name="Chen P."/>
            <person name="Wu S."/>
            <person name="Liu J."/>
            <person name="Xiao Y."/>
            <person name="Bu D."/>
            <person name="Tan J."/>
            <person name="Yang L."/>
            <person name="Ye C."/>
            <person name="Zhang J."/>
            <person name="Xu J."/>
            <person name="Zhou Y."/>
            <person name="Yu Y."/>
            <person name="Zhang B."/>
            <person name="Zhuang S."/>
            <person name="Wei H."/>
            <person name="Liu B."/>
            <person name="Lei M."/>
            <person name="Yu H."/>
            <person name="Li Y."/>
            <person name="Xu H."/>
            <person name="Wei S."/>
            <person name="He X."/>
            <person name="Fang L."/>
            <person name="Zhang Z."/>
            <person name="Zhang Y."/>
            <person name="Huang X."/>
            <person name="Su Z."/>
            <person name="Tong W."/>
            <person name="Li J."/>
            <person name="Tong Z."/>
            <person name="Li S."/>
            <person name="Ye J."/>
            <person name="Wang L."/>
            <person name="Fang L."/>
            <person name="Lei T."/>
            <person name="Chen C.-S."/>
            <person name="Chen H.-C."/>
            <person name="Xu Z."/>
            <person name="Li H."/>
            <person name="Huang H."/>
            <person name="Zhang F."/>
            <person name="Xu H."/>
            <person name="Li N."/>
            <person name="Zhao C."/>
            <person name="Li S."/>
            <person name="Dong L."/>
            <person name="Huang Y."/>
            <person name="Li L."/>
            <person name="Xi Y."/>
            <person name="Qi Q."/>
            <person name="Li W."/>
            <person name="Zhang B."/>
            <person name="Hu W."/>
            <person name="Zhang Y."/>
            <person name="Tian X."/>
            <person name="Jiao Y."/>
            <person name="Liang X."/>
            <person name="Jin J."/>
            <person name="Gao L."/>
            <person name="Zheng W."/>
            <person name="Hao B."/>
            <person name="Liu S.-M."/>
            <person name="Wang W."/>
            <person name="Yuan L."/>
            <person name="Cao M."/>
            <person name="McDermott J."/>
            <person name="Samudrala R."/>
            <person name="Wang J."/>
            <person name="Wong G.K.-S."/>
            <person name="Yang H."/>
        </authorList>
    </citation>
    <scope>NUCLEOTIDE SEQUENCE [LARGE SCALE GENOMIC DNA]</scope>
    <source>
        <strain>cv. 93-11</strain>
    </source>
</reference>
<reference key="3">
    <citation type="journal article" date="2008" name="Plant Mol. Biol.">
        <title>A genome-wide survey of HD-Zip genes in rice and analysis of drought-responsive family members.</title>
        <authorList>
            <person name="Agalou A."/>
            <person name="Purwantomo S."/>
            <person name="Oevernaes E."/>
            <person name="Johannesson H."/>
            <person name="Zhu X."/>
            <person name="Estiati A."/>
            <person name="de Kam R.J."/>
            <person name="Engstroem P."/>
            <person name="Slamet-Loedin I.H."/>
            <person name="Zhu Z."/>
            <person name="Wang M."/>
            <person name="Xiong L."/>
            <person name="Meijer A.H."/>
            <person name="Ouwerkerk P.B.F."/>
        </authorList>
    </citation>
    <scope>NUCLEOTIDE SEQUENCE [MRNA] OF 1-101</scope>
    <scope>TISSUE SPECIFICITY</scope>
    <scope>GENE FAMILY</scope>
    <scope>NOMENCLATURE</scope>
    <source>
        <strain>cv. Minghui 86</strain>
    </source>
</reference>
<keyword id="KW-0238">DNA-binding</keyword>
<keyword id="KW-0371">Homeobox</keyword>
<keyword id="KW-0539">Nucleus</keyword>
<keyword id="KW-1185">Reference proteome</keyword>
<keyword id="KW-0804">Transcription</keyword>
<keyword id="KW-0805">Transcription regulation</keyword>
<evidence type="ECO:0000255" key="1">
    <source>
        <dbReference type="PROSITE-ProRule" id="PRU00108"/>
    </source>
</evidence>
<evidence type="ECO:0000256" key="2">
    <source>
        <dbReference type="SAM" id="MobiDB-lite"/>
    </source>
</evidence>
<evidence type="ECO:0000269" key="3">
    <source>
    </source>
</evidence>
<evidence type="ECO:0000269" key="4">
    <source>
    </source>
</evidence>
<evidence type="ECO:0000305" key="5"/>
<feature type="chain" id="PRO_0000331678" description="Homeobox-leucine zipper protein HOX3">
    <location>
        <begin position="1"/>
        <end position="229"/>
    </location>
</feature>
<feature type="DNA-binding region" description="Homeobox" evidence="1">
    <location>
        <begin position="75"/>
        <end position="134"/>
    </location>
</feature>
<feature type="region of interest" description="Disordered" evidence="2">
    <location>
        <begin position="1"/>
        <end position="82"/>
    </location>
</feature>
<feature type="region of interest" description="Leucine-zipper">
    <location>
        <begin position="133"/>
        <end position="177"/>
    </location>
</feature>
<feature type="region of interest" description="Disordered" evidence="2">
    <location>
        <begin position="198"/>
        <end position="229"/>
    </location>
</feature>
<feature type="compositionally biased region" description="Acidic residues" evidence="2">
    <location>
        <begin position="52"/>
        <end position="68"/>
    </location>
</feature>
<gene>
    <name type="primary">HOX3</name>
    <name type="ORF">OsI_002994</name>
</gene>
<name>HOX3_ORYSI</name>
<dbReference type="EMBL" id="AF145727">
    <property type="protein sequence ID" value="AAD37696.1"/>
    <property type="molecule type" value="mRNA"/>
</dbReference>
<dbReference type="EMBL" id="CM000126">
    <property type="protein sequence ID" value="EAY75147.1"/>
    <property type="status" value="ALT_INIT"/>
    <property type="molecule type" value="Genomic_DNA"/>
</dbReference>
<dbReference type="EMBL" id="EF555523">
    <property type="protein sequence ID" value="ABQ57266.1"/>
    <property type="molecule type" value="mRNA"/>
</dbReference>
<dbReference type="SMR" id="Q9XH38"/>
<dbReference type="EnsemblPlants" id="OsGoSa_01g0026120.01">
    <property type="protein sequence ID" value="OsGoSa_01g0026120.01"/>
    <property type="gene ID" value="OsGoSa_01g0026120"/>
</dbReference>
<dbReference type="EnsemblPlants" id="OsIR64_01g0025590.01">
    <property type="protein sequence ID" value="OsIR64_01g0025590.01"/>
    <property type="gene ID" value="OsIR64_01g0025590"/>
</dbReference>
<dbReference type="EnsemblPlants" id="OsKYG_01g0025790.01">
    <property type="protein sequence ID" value="OsKYG_01g0025790.01"/>
    <property type="gene ID" value="OsKYG_01g0025790"/>
</dbReference>
<dbReference type="EnsemblPlants" id="OsLaMu_01g0025990.01">
    <property type="protein sequence ID" value="OsLaMu_01g0025990.01"/>
    <property type="gene ID" value="OsLaMu_01g0025990"/>
</dbReference>
<dbReference type="EnsemblPlants" id="OsLima_01g0025870.01">
    <property type="protein sequence ID" value="OsLima_01g0025870.01"/>
    <property type="gene ID" value="OsLima_01g0025870"/>
</dbReference>
<dbReference type="EnsemblPlants" id="OsLiXu_01g0026160.01">
    <property type="protein sequence ID" value="OsLiXu_01g0026160.01"/>
    <property type="gene ID" value="OsLiXu_01g0026160"/>
</dbReference>
<dbReference type="EnsemblPlants" id="OsMH63_01G026690_01">
    <property type="protein sequence ID" value="OsMH63_01G026690_01"/>
    <property type="gene ID" value="OsMH63_01G026690"/>
</dbReference>
<dbReference type="EnsemblPlants" id="OsPr106_01g0025950.01">
    <property type="protein sequence ID" value="OsPr106_01g0025950.01"/>
    <property type="gene ID" value="OsPr106_01g0025950"/>
</dbReference>
<dbReference type="EnsemblPlants" id="OsZS97_01G025980_01">
    <property type="protein sequence ID" value="OsZS97_01G025980_01"/>
    <property type="gene ID" value="OsZS97_01G025980"/>
</dbReference>
<dbReference type="Gramene" id="OsGoSa_01g0026120.01">
    <property type="protein sequence ID" value="OsGoSa_01g0026120.01"/>
    <property type="gene ID" value="OsGoSa_01g0026120"/>
</dbReference>
<dbReference type="Gramene" id="OsIR64_01g0025590.01">
    <property type="protein sequence ID" value="OsIR64_01g0025590.01"/>
    <property type="gene ID" value="OsIR64_01g0025590"/>
</dbReference>
<dbReference type="Gramene" id="OsKYG_01g0025790.01">
    <property type="protein sequence ID" value="OsKYG_01g0025790.01"/>
    <property type="gene ID" value="OsKYG_01g0025790"/>
</dbReference>
<dbReference type="Gramene" id="OsLaMu_01g0025990.01">
    <property type="protein sequence ID" value="OsLaMu_01g0025990.01"/>
    <property type="gene ID" value="OsLaMu_01g0025990"/>
</dbReference>
<dbReference type="Gramene" id="OsLima_01g0025870.01">
    <property type="protein sequence ID" value="OsLima_01g0025870.01"/>
    <property type="gene ID" value="OsLima_01g0025870"/>
</dbReference>
<dbReference type="Gramene" id="OsLiXu_01g0026160.01">
    <property type="protein sequence ID" value="OsLiXu_01g0026160.01"/>
    <property type="gene ID" value="OsLiXu_01g0026160"/>
</dbReference>
<dbReference type="Gramene" id="OsMH63_01G026690_01">
    <property type="protein sequence ID" value="OsMH63_01G026690_01"/>
    <property type="gene ID" value="OsMH63_01G026690"/>
</dbReference>
<dbReference type="Gramene" id="OsPr106_01g0025950.01">
    <property type="protein sequence ID" value="OsPr106_01g0025950.01"/>
    <property type="gene ID" value="OsPr106_01g0025950"/>
</dbReference>
<dbReference type="Gramene" id="OsZS97_01G025980_01">
    <property type="protein sequence ID" value="OsZS97_01G025980_01"/>
    <property type="gene ID" value="OsZS97_01G025980"/>
</dbReference>
<dbReference type="HOGENOM" id="CLU_049516_6_0_1"/>
<dbReference type="OrthoDB" id="6159439at2759"/>
<dbReference type="Proteomes" id="UP000007015">
    <property type="component" value="Chromosome 1"/>
</dbReference>
<dbReference type="GO" id="GO:0005634">
    <property type="term" value="C:nucleus"/>
    <property type="evidence" value="ECO:0007669"/>
    <property type="project" value="UniProtKB-SubCell"/>
</dbReference>
<dbReference type="GO" id="GO:0000981">
    <property type="term" value="F:DNA-binding transcription factor activity, RNA polymerase II-specific"/>
    <property type="evidence" value="ECO:0007669"/>
    <property type="project" value="InterPro"/>
</dbReference>
<dbReference type="GO" id="GO:0043565">
    <property type="term" value="F:sequence-specific DNA binding"/>
    <property type="evidence" value="ECO:0007669"/>
    <property type="project" value="InterPro"/>
</dbReference>
<dbReference type="CDD" id="cd00086">
    <property type="entry name" value="homeodomain"/>
    <property type="match status" value="1"/>
</dbReference>
<dbReference type="FunFam" id="1.10.10.60:FF:000577">
    <property type="entry name" value="Homeobox-leucine zipper protein 18"/>
    <property type="match status" value="1"/>
</dbReference>
<dbReference type="Gene3D" id="1.10.10.60">
    <property type="entry name" value="Homeodomain-like"/>
    <property type="match status" value="1"/>
</dbReference>
<dbReference type="InterPro" id="IPR001356">
    <property type="entry name" value="HD"/>
</dbReference>
<dbReference type="InterPro" id="IPR050762">
    <property type="entry name" value="HD-ZIP_Homeobox_LZ_Class_II"/>
</dbReference>
<dbReference type="InterPro" id="IPR017970">
    <property type="entry name" value="Homeobox_CS"/>
</dbReference>
<dbReference type="InterPro" id="IPR009057">
    <property type="entry name" value="Homeodomain-like_sf"/>
</dbReference>
<dbReference type="InterPro" id="IPR003106">
    <property type="entry name" value="Leu_zip_homeo"/>
</dbReference>
<dbReference type="PANTHER" id="PTHR45714:SF8">
    <property type="entry name" value="HOMEOBOX-LEUCINE ZIPPER PROTEIN ATHB-17"/>
    <property type="match status" value="1"/>
</dbReference>
<dbReference type="PANTHER" id="PTHR45714">
    <property type="entry name" value="HOMEOBOX-LEUCINE ZIPPER PROTEIN HAT14"/>
    <property type="match status" value="1"/>
</dbReference>
<dbReference type="Pfam" id="PF02183">
    <property type="entry name" value="HALZ"/>
    <property type="match status" value="1"/>
</dbReference>
<dbReference type="Pfam" id="PF00046">
    <property type="entry name" value="Homeodomain"/>
    <property type="match status" value="1"/>
</dbReference>
<dbReference type="SMART" id="SM00340">
    <property type="entry name" value="HALZ"/>
    <property type="match status" value="1"/>
</dbReference>
<dbReference type="SMART" id="SM00389">
    <property type="entry name" value="HOX"/>
    <property type="match status" value="1"/>
</dbReference>
<dbReference type="SUPFAM" id="SSF46689">
    <property type="entry name" value="Homeodomain-like"/>
    <property type="match status" value="1"/>
</dbReference>
<dbReference type="PROSITE" id="PS00027">
    <property type="entry name" value="HOMEOBOX_1"/>
    <property type="match status" value="1"/>
</dbReference>
<dbReference type="PROSITE" id="PS50071">
    <property type="entry name" value="HOMEOBOX_2"/>
    <property type="match status" value="1"/>
</dbReference>
<proteinExistence type="evidence at protein level"/>
<accession>Q9XH38</accession>
<accession>A2WT51</accession>
<accession>A5JPU0</accession>